<evidence type="ECO:0000250" key="1"/>
<evidence type="ECO:0000255" key="2"/>
<evidence type="ECO:0000269" key="3">
    <source>
    </source>
</evidence>
<evidence type="ECO:0000305" key="4"/>
<name>MTAA_METBA</name>
<proteinExistence type="evidence at protein level"/>
<organism>
    <name type="scientific">Methanosarcina barkeri</name>
    <dbReference type="NCBI Taxonomy" id="2208"/>
    <lineage>
        <taxon>Archaea</taxon>
        <taxon>Methanobacteriati</taxon>
        <taxon>Methanobacteriota</taxon>
        <taxon>Stenosarchaea group</taxon>
        <taxon>Methanomicrobia</taxon>
        <taxon>Methanosarcinales</taxon>
        <taxon>Methanosarcinaceae</taxon>
        <taxon>Methanosarcina</taxon>
    </lineage>
</organism>
<accession>Q48927</accession>
<keyword id="KW-0903">Direct protein sequencing</keyword>
<keyword id="KW-0479">Metal-binding</keyword>
<keyword id="KW-0484">Methanogenesis</keyword>
<keyword id="KW-0489">Methyltransferase</keyword>
<keyword id="KW-0808">Transferase</keyword>
<keyword id="KW-0862">Zinc</keyword>
<gene>
    <name type="primary">mtaA</name>
    <name type="synonym">cmtM</name>
</gene>
<sequence length="339" mass="35933">MSEFTLKTRLLAALEGKPVDKVPVCSVTQTGIVELMDEVGAAWPEAHTNPELMAKLAIANYELSGLEAVRLPYCLTVLGEAMGCEINMGTKNRQPSVTASPYPKNLDGAAVPADLLQRNRIPAVLEAIKIVREKVGPDVPIIGGMEGPVTLASDLISVKSFMKWSIKKTDLFEQALDISTEAAIAYANAMVEAGADVIAIADPVASPDLMSPDTFRQFLQSRLQKFSASVNSVTVLHICGKVNAILSDMADCGFEGLSVEEKIGDAAEGKKVIGDRARLVGNISSPFTLLPGPIDKIKAEAKVALEGGIDVLAPGCGIAPMTPLENIKALVAARDEYYA</sequence>
<protein>
    <recommendedName>
        <fullName>Methylcobamide:CoM methyltransferase MtaA</fullName>
        <ecNumber>2.1.1.246</ecNumber>
    </recommendedName>
    <alternativeName>
        <fullName>Methylcobalamin: Coenzyme M methyltransferase</fullName>
    </alternativeName>
    <alternativeName>
        <fullName>Methylcobamide:CoM methyltransferase II isozyme M</fullName>
        <shortName>MT2-M</shortName>
    </alternativeName>
    <alternativeName>
        <fullName>[Methyl-Co(III) methanol-specific corrinoid protein]:coenzyme M methyltransferase</fullName>
    </alternativeName>
</protein>
<dbReference type="EC" id="2.1.1.246"/>
<dbReference type="EMBL" id="U38918">
    <property type="protein sequence ID" value="AAC44213.1"/>
    <property type="molecule type" value="Genomic_DNA"/>
</dbReference>
<dbReference type="SMR" id="Q48927"/>
<dbReference type="SABIO-RK" id="Q48927"/>
<dbReference type="GO" id="GO:1990088">
    <property type="term" value="F:[methyl-Co(III) methanol-specific corrinoid protein]:coenzyme M methyltransferase"/>
    <property type="evidence" value="ECO:0007669"/>
    <property type="project" value="UniProtKB-EC"/>
</dbReference>
<dbReference type="GO" id="GO:0046872">
    <property type="term" value="F:metal ion binding"/>
    <property type="evidence" value="ECO:0007669"/>
    <property type="project" value="UniProtKB-KW"/>
</dbReference>
<dbReference type="GO" id="GO:0004853">
    <property type="term" value="F:uroporphyrinogen decarboxylase activity"/>
    <property type="evidence" value="ECO:0007669"/>
    <property type="project" value="InterPro"/>
</dbReference>
<dbReference type="GO" id="GO:0015948">
    <property type="term" value="P:methanogenesis"/>
    <property type="evidence" value="ECO:0007669"/>
    <property type="project" value="UniProtKB-KW"/>
</dbReference>
<dbReference type="GO" id="GO:0032259">
    <property type="term" value="P:methylation"/>
    <property type="evidence" value="ECO:0007669"/>
    <property type="project" value="UniProtKB-KW"/>
</dbReference>
<dbReference type="GO" id="GO:0006730">
    <property type="term" value="P:one-carbon metabolic process"/>
    <property type="evidence" value="ECO:0007669"/>
    <property type="project" value="InterPro"/>
</dbReference>
<dbReference type="GO" id="GO:0006779">
    <property type="term" value="P:porphyrin-containing compound biosynthetic process"/>
    <property type="evidence" value="ECO:0007669"/>
    <property type="project" value="InterPro"/>
</dbReference>
<dbReference type="CDD" id="cd03307">
    <property type="entry name" value="Mta_CmuA_like"/>
    <property type="match status" value="1"/>
</dbReference>
<dbReference type="Gene3D" id="3.20.20.210">
    <property type="match status" value="1"/>
</dbReference>
<dbReference type="InterPro" id="IPR052024">
    <property type="entry name" value="Methanogen_methyltrans"/>
</dbReference>
<dbReference type="InterPro" id="IPR006360">
    <property type="entry name" value="Mtase_MtaA_CmuA"/>
</dbReference>
<dbReference type="InterPro" id="IPR038071">
    <property type="entry name" value="UROD/MetE-like_sf"/>
</dbReference>
<dbReference type="InterPro" id="IPR000257">
    <property type="entry name" value="Uroporphyrinogen_deCOase"/>
</dbReference>
<dbReference type="NCBIfam" id="TIGR01463">
    <property type="entry name" value="mtaA_cmuA"/>
    <property type="match status" value="1"/>
</dbReference>
<dbReference type="NCBIfam" id="NF040654">
    <property type="entry name" value="MtaA_Meth"/>
    <property type="match status" value="1"/>
</dbReference>
<dbReference type="NCBIfam" id="NF004889">
    <property type="entry name" value="PRK06252.1"/>
    <property type="match status" value="1"/>
</dbReference>
<dbReference type="PANTHER" id="PTHR47099">
    <property type="entry name" value="METHYLCOBAMIDE:COM METHYLTRANSFERASE MTBA"/>
    <property type="match status" value="1"/>
</dbReference>
<dbReference type="PANTHER" id="PTHR47099:SF1">
    <property type="entry name" value="METHYLCOBAMIDE:COM METHYLTRANSFERASE MTBA"/>
    <property type="match status" value="1"/>
</dbReference>
<dbReference type="Pfam" id="PF01208">
    <property type="entry name" value="URO-D"/>
    <property type="match status" value="1"/>
</dbReference>
<dbReference type="SUPFAM" id="SSF51726">
    <property type="entry name" value="UROD/MetE-like"/>
    <property type="match status" value="1"/>
</dbReference>
<comment type="function">
    <text evidence="3">Methyltransferase involved in methanogenesis in the methanol pathway. Catalyzes the transfer of the methyl group from the methylated corrinoid protein MtaC to coenzyme M, forming the substrate for coenzyme-B sulfoethylthiotransferase. MtaC can be substituted by free cob(I)alamin in vitro.</text>
</comment>
<comment type="catalytic activity">
    <reaction evidence="3">
        <text>methyl-Co(III)-[methanol-specific corrinoid protein] + coenzyme M = Co(I)-[methanol-specific corrinoid protein] + methyl-coenzyme M + H(+)</text>
        <dbReference type="Rhea" id="RHEA:45208"/>
        <dbReference type="Rhea" id="RHEA-COMP:17570"/>
        <dbReference type="Rhea" id="RHEA-COMP:17571"/>
        <dbReference type="ChEBI" id="CHEBI:15378"/>
        <dbReference type="ChEBI" id="CHEBI:16379"/>
        <dbReference type="ChEBI" id="CHEBI:58286"/>
        <dbReference type="ChEBI" id="CHEBI:58319"/>
        <dbReference type="ChEBI" id="CHEBI:60494"/>
        <dbReference type="EC" id="2.1.1.246"/>
    </reaction>
</comment>
<comment type="cofactor">
    <cofactor evidence="3">
        <name>Zn(2+)</name>
        <dbReference type="ChEBI" id="CHEBI:29105"/>
    </cofactor>
    <text evidence="3">Zn(2+) is involved in coenzyme M activation: in the absence of coenzyme M, zinc is coordinated by a single sulfur ligand and three oxygen or nitrogen ligands. In the presence of coenzyme M, one oxygen/nitrogen-ligand is replaced by sulfur, probably due to ligation of the thiol group of coenzyme M.</text>
</comment>
<comment type="biophysicochemical properties">
    <kinetics>
        <KM evidence="3">10 mM for 3-mercaptopropionate</KM>
    </kinetics>
</comment>
<comment type="similarity">
    <text evidence="4">Belongs to the uroporphyrinogen decarboxylase family. MtbA/mtaA subfamily.</text>
</comment>
<reference key="1">
    <citation type="journal article" date="1996" name="J. Biol. Chem.">
        <title>Methylcobamide:coenzyme M methyltransferase isozymes from Methanosarcina barkeri: physicochemical characterization, cloning, sequence analysis, and heterologous gene expression.</title>
        <authorList>
            <person name="Leclerc G.M."/>
            <person name="Grahame D.A."/>
        </authorList>
    </citation>
    <scope>NUCLEOTIDE SEQUENCE [GENOMIC DNA]</scope>
    <scope>PROTEIN SEQUENCE OF 15-21 AND 88-94</scope>
    <scope>FUNCTION</scope>
    <scope>BIOPHYSICOCHEMICAL PROPERTIES</scope>
    <scope>CATALYTIC ACTIVITY</scope>
    <scope>COFACTOR</scope>
    <source>
        <strain>NIH</strain>
    </source>
</reference>
<feature type="chain" id="PRO_0000418940" description="Methylcobamide:CoM methyltransferase MtaA">
    <location>
        <begin position="1"/>
        <end position="339"/>
    </location>
</feature>
<feature type="binding site" evidence="1">
    <location>
        <position position="237"/>
    </location>
    <ligand>
        <name>Zn(2+)</name>
        <dbReference type="ChEBI" id="CHEBI:29105"/>
    </ligand>
</feature>
<feature type="binding site" evidence="1">
    <location>
        <position position="239"/>
    </location>
    <ligand>
        <name>Zn(2+)</name>
        <dbReference type="ChEBI" id="CHEBI:29105"/>
    </ligand>
</feature>
<feature type="binding site" evidence="2">
    <location>
        <position position="316"/>
    </location>
    <ligand>
        <name>Zn(2+)</name>
        <dbReference type="ChEBI" id="CHEBI:29105"/>
    </ligand>
</feature>